<comment type="function">
    <text evidence="1">Necessary for the splicing of pre-mRNA. Has a role in the recognition of the branch site (5'-UACUAAC-3'), the pyrimidine tract and the 3'-splice site at the 3'-end of introns (By similarity).</text>
</comment>
<comment type="subcellular location">
    <subcellularLocation>
        <location evidence="1">Nucleus</location>
    </subcellularLocation>
</comment>
<comment type="similarity">
    <text evidence="5">Belongs to the BBP/SF1 family.</text>
</comment>
<protein>
    <recommendedName>
        <fullName>Branchpoint-bridging protein</fullName>
    </recommendedName>
</protein>
<sequence>MWRPAAKTTGTNDVPLANKRRFGLPEEGPPSNSPSYAPRPAADIQYFNGRQERERDARDDRERPRDDYDRRRDDYVRDDRDRRYDDYPRDGHSDRRDERSKWDEGDRREAPRGRERSRDRGDSNEDGPRKRRSRWGDASAKVNVPGMPVAVMGNVSQTELDNYAIHVRLEEINRKLRTGDVVPPEGQRSPSPTPQYDAYGRRTNTRELRYRKKLEDERTRLIDRAVKSDPNFRPPVDFQHKRGSRPQDKVYIPVKEFPEINFFGLLVGPRGNSLKKMERESGAKISIRGKGSVKEGKGRAGNFPQDEEDELHCLITADDESKVKTCVALINKVIETAASTPEGENDHKRNQLRELASLNGTLRDDENQLCQNCGEKGHRRWECPQQRVYSANVICRICGGAGHMARDCRGRGDPSLTQNKQTAFDSEYTALMAELGEGGGSTPGSAPAAAIGAPGAIPPQSRVPPWRLPENWQTNSGGFRGPPNFQAQGYQQAAPGAAAYGQQAYPGYAGYQTGAVSGYGSPATGGADAYAAYYASMGQQAPAAAV</sequence>
<feature type="chain" id="PRO_0000256147" description="Branchpoint-bridging protein">
    <location>
        <begin position="1"/>
        <end position="546"/>
    </location>
</feature>
<feature type="domain" description="KH" evidence="3">
    <location>
        <begin position="251"/>
        <end position="330"/>
    </location>
</feature>
<feature type="zinc finger region" description="CCHC-type 1" evidence="2">
    <location>
        <begin position="368"/>
        <end position="385"/>
    </location>
</feature>
<feature type="zinc finger region" description="CCHC-type 2" evidence="2">
    <location>
        <begin position="393"/>
        <end position="410"/>
    </location>
</feature>
<feature type="region of interest" description="Disordered" evidence="4">
    <location>
        <begin position="1"/>
        <end position="141"/>
    </location>
</feature>
<feature type="region of interest" description="Disordered" evidence="4">
    <location>
        <begin position="178"/>
        <end position="199"/>
    </location>
</feature>
<feature type="compositionally biased region" description="Basic and acidic residues" evidence="4">
    <location>
        <begin position="50"/>
        <end position="128"/>
    </location>
</feature>
<organism>
    <name type="scientific">Cryptococcus neoformans var. neoformans serotype D (strain JEC21 / ATCC MYA-565)</name>
    <name type="common">Filobasidiella neoformans</name>
    <dbReference type="NCBI Taxonomy" id="214684"/>
    <lineage>
        <taxon>Eukaryota</taxon>
        <taxon>Fungi</taxon>
        <taxon>Dikarya</taxon>
        <taxon>Basidiomycota</taxon>
        <taxon>Agaricomycotina</taxon>
        <taxon>Tremellomycetes</taxon>
        <taxon>Tremellales</taxon>
        <taxon>Cryptococcaceae</taxon>
        <taxon>Cryptococcus</taxon>
        <taxon>Cryptococcus neoformans species complex</taxon>
    </lineage>
</organism>
<evidence type="ECO:0000250" key="1"/>
<evidence type="ECO:0000255" key="2">
    <source>
        <dbReference type="PROSITE-ProRule" id="PRU00047"/>
    </source>
</evidence>
<evidence type="ECO:0000255" key="3">
    <source>
        <dbReference type="PROSITE-ProRule" id="PRU00117"/>
    </source>
</evidence>
<evidence type="ECO:0000256" key="4">
    <source>
        <dbReference type="SAM" id="MobiDB-lite"/>
    </source>
</evidence>
<evidence type="ECO:0000305" key="5"/>
<dbReference type="EMBL" id="AE017344">
    <property type="protein sequence ID" value="AAW42902.1"/>
    <property type="molecule type" value="Genomic_DNA"/>
</dbReference>
<dbReference type="RefSeq" id="XP_570209.1">
    <property type="nucleotide sequence ID" value="XM_570209.1"/>
</dbReference>
<dbReference type="SMR" id="P0CO44"/>
<dbReference type="FunCoup" id="P0CO44">
    <property type="interactions" value="670"/>
</dbReference>
<dbReference type="STRING" id="214684.P0CO44"/>
<dbReference type="PaxDb" id="214684-P0CO44"/>
<dbReference type="EnsemblFungi" id="AAW42902">
    <property type="protein sequence ID" value="AAW42902"/>
    <property type="gene ID" value="CND02880"/>
</dbReference>
<dbReference type="GeneID" id="3257032"/>
<dbReference type="KEGG" id="cne:CND02880"/>
<dbReference type="VEuPathDB" id="FungiDB:CND02880"/>
<dbReference type="eggNOG" id="KOG0119">
    <property type="taxonomic scope" value="Eukaryota"/>
</dbReference>
<dbReference type="HOGENOM" id="CLU_016864_3_1_1"/>
<dbReference type="InParanoid" id="P0CO44"/>
<dbReference type="OMA" id="DTKNSHK"/>
<dbReference type="OrthoDB" id="6777263at2759"/>
<dbReference type="Proteomes" id="UP000002149">
    <property type="component" value="Chromosome 4"/>
</dbReference>
<dbReference type="GO" id="GO:0000243">
    <property type="term" value="C:commitment complex"/>
    <property type="evidence" value="ECO:0007669"/>
    <property type="project" value="EnsemblFungi"/>
</dbReference>
<dbReference type="GO" id="GO:0005829">
    <property type="term" value="C:cytosol"/>
    <property type="evidence" value="ECO:0007669"/>
    <property type="project" value="EnsemblFungi"/>
</dbReference>
<dbReference type="GO" id="GO:0005634">
    <property type="term" value="C:nucleus"/>
    <property type="evidence" value="ECO:0000318"/>
    <property type="project" value="GO_Central"/>
</dbReference>
<dbReference type="GO" id="GO:0071004">
    <property type="term" value="C:U2-type prespliceosome"/>
    <property type="evidence" value="ECO:0007669"/>
    <property type="project" value="EnsemblFungi"/>
</dbReference>
<dbReference type="GO" id="GO:0003729">
    <property type="term" value="F:mRNA binding"/>
    <property type="evidence" value="ECO:0000318"/>
    <property type="project" value="GO_Central"/>
</dbReference>
<dbReference type="GO" id="GO:0008270">
    <property type="term" value="F:zinc ion binding"/>
    <property type="evidence" value="ECO:0007669"/>
    <property type="project" value="UniProtKB-KW"/>
</dbReference>
<dbReference type="GO" id="GO:0045292">
    <property type="term" value="P:mRNA cis splicing, via spliceosome"/>
    <property type="evidence" value="ECO:0007669"/>
    <property type="project" value="EnsemblFungi"/>
</dbReference>
<dbReference type="GO" id="GO:0048024">
    <property type="term" value="P:regulation of mRNA splicing, via spliceosome"/>
    <property type="evidence" value="ECO:0000318"/>
    <property type="project" value="GO_Central"/>
</dbReference>
<dbReference type="CDD" id="cd02395">
    <property type="entry name" value="KH-I_BBP"/>
    <property type="match status" value="1"/>
</dbReference>
<dbReference type="FunFam" id="4.10.60.10:FF:000030">
    <property type="entry name" value="Branchpoint-bridging protein"/>
    <property type="match status" value="1"/>
</dbReference>
<dbReference type="FunFam" id="3.30.1370.10:FF:000024">
    <property type="entry name" value="Branchpoint-bridging protein-like protein"/>
    <property type="match status" value="1"/>
</dbReference>
<dbReference type="Gene3D" id="6.10.140.1790">
    <property type="match status" value="1"/>
</dbReference>
<dbReference type="Gene3D" id="3.30.1370.10">
    <property type="entry name" value="K Homology domain, type 1"/>
    <property type="match status" value="1"/>
</dbReference>
<dbReference type="Gene3D" id="4.10.60.10">
    <property type="entry name" value="Zinc finger, CCHC-type"/>
    <property type="match status" value="1"/>
</dbReference>
<dbReference type="InterPro" id="IPR045071">
    <property type="entry name" value="BBP-like"/>
</dbReference>
<dbReference type="InterPro" id="IPR055256">
    <property type="entry name" value="KH_1_KHDC4/BBP-like"/>
</dbReference>
<dbReference type="InterPro" id="IPR004087">
    <property type="entry name" value="KH_dom"/>
</dbReference>
<dbReference type="InterPro" id="IPR036612">
    <property type="entry name" value="KH_dom_type_1_sf"/>
</dbReference>
<dbReference type="InterPro" id="IPR032570">
    <property type="entry name" value="SF1-HH"/>
</dbReference>
<dbReference type="InterPro" id="IPR047086">
    <property type="entry name" value="SF1-HH_sf"/>
</dbReference>
<dbReference type="InterPro" id="IPR001878">
    <property type="entry name" value="Znf_CCHC"/>
</dbReference>
<dbReference type="InterPro" id="IPR036875">
    <property type="entry name" value="Znf_CCHC_sf"/>
</dbReference>
<dbReference type="PANTHER" id="PTHR11208">
    <property type="entry name" value="RNA-BINDING PROTEIN RELATED"/>
    <property type="match status" value="1"/>
</dbReference>
<dbReference type="PANTHER" id="PTHR11208:SF45">
    <property type="entry name" value="SPLICING FACTOR 1"/>
    <property type="match status" value="1"/>
</dbReference>
<dbReference type="Pfam" id="PF22675">
    <property type="entry name" value="KH-I_KHDC4-BBP"/>
    <property type="match status" value="1"/>
</dbReference>
<dbReference type="Pfam" id="PF16275">
    <property type="entry name" value="SF1-HH"/>
    <property type="match status" value="1"/>
</dbReference>
<dbReference type="Pfam" id="PF00098">
    <property type="entry name" value="zf-CCHC"/>
    <property type="match status" value="1"/>
</dbReference>
<dbReference type="Pfam" id="PF13917">
    <property type="entry name" value="zf-CCHC_3"/>
    <property type="match status" value="1"/>
</dbReference>
<dbReference type="SMART" id="SM00322">
    <property type="entry name" value="KH"/>
    <property type="match status" value="1"/>
</dbReference>
<dbReference type="SMART" id="SM00343">
    <property type="entry name" value="ZnF_C2HC"/>
    <property type="match status" value="2"/>
</dbReference>
<dbReference type="SUPFAM" id="SSF54791">
    <property type="entry name" value="Eukaryotic type KH-domain (KH-domain type I)"/>
    <property type="match status" value="1"/>
</dbReference>
<dbReference type="SUPFAM" id="SSF57756">
    <property type="entry name" value="Retrovirus zinc finger-like domains"/>
    <property type="match status" value="1"/>
</dbReference>
<dbReference type="PROSITE" id="PS50084">
    <property type="entry name" value="KH_TYPE_1"/>
    <property type="match status" value="1"/>
</dbReference>
<dbReference type="PROSITE" id="PS50158">
    <property type="entry name" value="ZF_CCHC"/>
    <property type="match status" value="2"/>
</dbReference>
<keyword id="KW-0479">Metal-binding</keyword>
<keyword id="KW-0507">mRNA processing</keyword>
<keyword id="KW-0508">mRNA splicing</keyword>
<keyword id="KW-0539">Nucleus</keyword>
<keyword id="KW-1185">Reference proteome</keyword>
<keyword id="KW-0677">Repeat</keyword>
<keyword id="KW-0694">RNA-binding</keyword>
<keyword id="KW-0747">Spliceosome</keyword>
<keyword id="KW-0862">Zinc</keyword>
<keyword id="KW-0863">Zinc-finger</keyword>
<name>BBP_CRYNJ</name>
<accession>P0CO44</accession>
<accession>Q55TV5</accession>
<accession>Q5KII2</accession>
<gene>
    <name type="primary">BBP</name>
    <name type="ordered locus">CND02880</name>
</gene>
<reference key="1">
    <citation type="journal article" date="2005" name="Science">
        <title>The genome of the basidiomycetous yeast and human pathogen Cryptococcus neoformans.</title>
        <authorList>
            <person name="Loftus B.J."/>
            <person name="Fung E."/>
            <person name="Roncaglia P."/>
            <person name="Rowley D."/>
            <person name="Amedeo P."/>
            <person name="Bruno D."/>
            <person name="Vamathevan J."/>
            <person name="Miranda M."/>
            <person name="Anderson I.J."/>
            <person name="Fraser J.A."/>
            <person name="Allen J.E."/>
            <person name="Bosdet I.E."/>
            <person name="Brent M.R."/>
            <person name="Chiu R."/>
            <person name="Doering T.L."/>
            <person name="Donlin M.J."/>
            <person name="D'Souza C.A."/>
            <person name="Fox D.S."/>
            <person name="Grinberg V."/>
            <person name="Fu J."/>
            <person name="Fukushima M."/>
            <person name="Haas B.J."/>
            <person name="Huang J.C."/>
            <person name="Janbon G."/>
            <person name="Jones S.J.M."/>
            <person name="Koo H.L."/>
            <person name="Krzywinski M.I."/>
            <person name="Kwon-Chung K.J."/>
            <person name="Lengeler K.B."/>
            <person name="Maiti R."/>
            <person name="Marra M.A."/>
            <person name="Marra R.E."/>
            <person name="Mathewson C.A."/>
            <person name="Mitchell T.G."/>
            <person name="Pertea M."/>
            <person name="Riggs F.R."/>
            <person name="Salzberg S.L."/>
            <person name="Schein J.E."/>
            <person name="Shvartsbeyn A."/>
            <person name="Shin H."/>
            <person name="Shumway M."/>
            <person name="Specht C.A."/>
            <person name="Suh B.B."/>
            <person name="Tenney A."/>
            <person name="Utterback T.R."/>
            <person name="Wickes B.L."/>
            <person name="Wortman J.R."/>
            <person name="Wye N.H."/>
            <person name="Kronstad J.W."/>
            <person name="Lodge J.K."/>
            <person name="Heitman J."/>
            <person name="Davis R.W."/>
            <person name="Fraser C.M."/>
            <person name="Hyman R.W."/>
        </authorList>
    </citation>
    <scope>NUCLEOTIDE SEQUENCE [LARGE SCALE GENOMIC DNA]</scope>
    <source>
        <strain>JEC21 / ATCC MYA-565</strain>
    </source>
</reference>
<proteinExistence type="inferred from homology"/>